<protein>
    <recommendedName>
        <fullName>Cyclin-dependent kinase 1</fullName>
        <shortName>CDK1</shortName>
        <ecNumber evidence="1">2.7.11.22</ecNumber>
        <ecNumber evidence="2">2.7.11.23</ecNumber>
    </recommendedName>
    <alternativeName>
        <fullName>Cell division control protein 2 homolog</fullName>
    </alternativeName>
    <alternativeName>
        <fullName>Cell division protein kinase 1</fullName>
    </alternativeName>
    <alternativeName>
        <fullName>p34 protein kinase</fullName>
    </alternativeName>
</protein>
<keyword id="KW-0067">ATP-binding</keyword>
<keyword id="KW-0131">Cell cycle</keyword>
<keyword id="KW-0132">Cell division</keyword>
<keyword id="KW-0963">Cytoplasm</keyword>
<keyword id="KW-0206">Cytoskeleton</keyword>
<keyword id="KW-0418">Kinase</keyword>
<keyword id="KW-0498">Mitosis</keyword>
<keyword id="KW-0547">Nucleotide-binding</keyword>
<keyword id="KW-0539">Nucleus</keyword>
<keyword id="KW-0597">Phosphoprotein</keyword>
<keyword id="KW-0723">Serine/threonine-protein kinase</keyword>
<keyword id="KW-0808">Transferase</keyword>
<accession>Q9DGA5</accession>
<organism>
    <name type="scientific">Oryzias curvinotus</name>
    <name type="common">Hynann ricefish</name>
    <name type="synonym">Aplocheilus curvinotus</name>
    <dbReference type="NCBI Taxonomy" id="104658"/>
    <lineage>
        <taxon>Eukaryota</taxon>
        <taxon>Metazoa</taxon>
        <taxon>Chordata</taxon>
        <taxon>Craniata</taxon>
        <taxon>Vertebrata</taxon>
        <taxon>Euteleostomi</taxon>
        <taxon>Actinopterygii</taxon>
        <taxon>Neopterygii</taxon>
        <taxon>Teleostei</taxon>
        <taxon>Neoteleostei</taxon>
        <taxon>Acanthomorphata</taxon>
        <taxon>Ovalentaria</taxon>
        <taxon>Atherinomorphae</taxon>
        <taxon>Beloniformes</taxon>
        <taxon>Adrianichthyidae</taxon>
        <taxon>Oryziinae</taxon>
        <taxon>Oryzias</taxon>
    </lineage>
</organism>
<comment type="function">
    <text evidence="1 3">Plays a key role in the control of the eukaryotic cell cycle by modulating the centrosome cycle as well as mitotic onset; promotes G2-M transition via association with multiple interphase cyclins (By similarity). During G2 and early mitosis, CDC25A/B/C-mediated dephosphorylation activates CDK1/cyclin complexes which phosphorylate several substrates that trigger at least centrosome separation, Golgi dynamics, nuclear envelope breakdown and chromosome condensation. Once chromosomes are condensed and aligned at the metaphase plate, CDK1 activity is switched off by WEE1- and PKMYT1-mediated phosphorylation to allow sister chromatid separation, chromosome decondensation, reformation of the nuclear envelope and cytokinesis (By similarity). Catalyzes lamin (LMNA, LMNB1 and LMNB2) phosphorylation at the onset of mitosis, promoting nuclear envelope breakdown (By similarity).</text>
</comment>
<comment type="catalytic activity">
    <reaction evidence="1">
        <text>L-seryl-[protein] + ATP = O-phospho-L-seryl-[protein] + ADP + H(+)</text>
        <dbReference type="Rhea" id="RHEA:17989"/>
        <dbReference type="Rhea" id="RHEA-COMP:9863"/>
        <dbReference type="Rhea" id="RHEA-COMP:11604"/>
        <dbReference type="ChEBI" id="CHEBI:15378"/>
        <dbReference type="ChEBI" id="CHEBI:29999"/>
        <dbReference type="ChEBI" id="CHEBI:30616"/>
        <dbReference type="ChEBI" id="CHEBI:83421"/>
        <dbReference type="ChEBI" id="CHEBI:456216"/>
        <dbReference type="EC" id="2.7.11.22"/>
    </reaction>
</comment>
<comment type="catalytic activity">
    <reaction evidence="1">
        <text>L-threonyl-[protein] + ATP = O-phospho-L-threonyl-[protein] + ADP + H(+)</text>
        <dbReference type="Rhea" id="RHEA:46608"/>
        <dbReference type="Rhea" id="RHEA-COMP:11060"/>
        <dbReference type="Rhea" id="RHEA-COMP:11605"/>
        <dbReference type="ChEBI" id="CHEBI:15378"/>
        <dbReference type="ChEBI" id="CHEBI:30013"/>
        <dbReference type="ChEBI" id="CHEBI:30616"/>
        <dbReference type="ChEBI" id="CHEBI:61977"/>
        <dbReference type="ChEBI" id="CHEBI:456216"/>
        <dbReference type="EC" id="2.7.11.22"/>
    </reaction>
</comment>
<comment type="catalytic activity">
    <reaction evidence="2">
        <text>[DNA-directed RNA polymerase] + ATP = phospho-[DNA-directed RNA polymerase] + ADP + H(+)</text>
        <dbReference type="Rhea" id="RHEA:10216"/>
        <dbReference type="Rhea" id="RHEA-COMP:11321"/>
        <dbReference type="Rhea" id="RHEA-COMP:11322"/>
        <dbReference type="ChEBI" id="CHEBI:15378"/>
        <dbReference type="ChEBI" id="CHEBI:30616"/>
        <dbReference type="ChEBI" id="CHEBI:43176"/>
        <dbReference type="ChEBI" id="CHEBI:68546"/>
        <dbReference type="ChEBI" id="CHEBI:456216"/>
        <dbReference type="EC" id="2.7.11.23"/>
    </reaction>
</comment>
<comment type="activity regulation">
    <text evidence="1">Phosphorylation at Thr-14 or Tyr-15 inactivates the enzyme, while phosphorylation at Thr-161 activates it.</text>
</comment>
<comment type="subunit">
    <text evidence="4">Forms a stable but non-covalent complex with cyclin B in mature oocytes.</text>
</comment>
<comment type="subcellular location">
    <subcellularLocation>
        <location evidence="1">Nucleus</location>
    </subcellularLocation>
    <subcellularLocation>
        <location evidence="1">Cytoplasm</location>
        <location evidence="1">Cytoskeleton</location>
        <location evidence="1">Microtubule organizing center</location>
        <location evidence="1">Centrosome</location>
    </subcellularLocation>
</comment>
<comment type="PTM">
    <text evidence="1">Phosphorylation at Tyr-15 by wee1 and wee2 inhibits the protein kinase activity and acts negative regulator of entry into mitosis (G2 to M transition).</text>
</comment>
<comment type="similarity">
    <text evidence="7">Belongs to the protein kinase superfamily. CMGC Ser/Thr protein kinase family. CDC2/CDKX subfamily.</text>
</comment>
<dbReference type="EC" id="2.7.11.22" evidence="1"/>
<dbReference type="EC" id="2.7.11.23" evidence="2"/>
<dbReference type="EMBL" id="AB050458">
    <property type="protein sequence ID" value="BAB17216.1"/>
    <property type="molecule type" value="mRNA"/>
</dbReference>
<dbReference type="SMR" id="Q9DGA5"/>
<dbReference type="GO" id="GO:0005813">
    <property type="term" value="C:centrosome"/>
    <property type="evidence" value="ECO:0007669"/>
    <property type="project" value="UniProtKB-SubCell"/>
</dbReference>
<dbReference type="GO" id="GO:0005737">
    <property type="term" value="C:cytoplasm"/>
    <property type="evidence" value="ECO:0007669"/>
    <property type="project" value="UniProtKB-KW"/>
</dbReference>
<dbReference type="GO" id="GO:0005634">
    <property type="term" value="C:nucleus"/>
    <property type="evidence" value="ECO:0007669"/>
    <property type="project" value="UniProtKB-SubCell"/>
</dbReference>
<dbReference type="GO" id="GO:0005524">
    <property type="term" value="F:ATP binding"/>
    <property type="evidence" value="ECO:0007669"/>
    <property type="project" value="UniProtKB-KW"/>
</dbReference>
<dbReference type="GO" id="GO:0004693">
    <property type="term" value="F:cyclin-dependent protein serine/threonine kinase activity"/>
    <property type="evidence" value="ECO:0000250"/>
    <property type="project" value="UniProtKB"/>
</dbReference>
<dbReference type="GO" id="GO:0106310">
    <property type="term" value="F:protein serine kinase activity"/>
    <property type="evidence" value="ECO:0007669"/>
    <property type="project" value="RHEA"/>
</dbReference>
<dbReference type="GO" id="GO:0008353">
    <property type="term" value="F:RNA polymerase II CTD heptapeptide repeat kinase activity"/>
    <property type="evidence" value="ECO:0007669"/>
    <property type="project" value="UniProtKB-EC"/>
</dbReference>
<dbReference type="GO" id="GO:0051301">
    <property type="term" value="P:cell division"/>
    <property type="evidence" value="ECO:0007669"/>
    <property type="project" value="UniProtKB-KW"/>
</dbReference>
<dbReference type="GO" id="GO:0000086">
    <property type="term" value="P:G2/M transition of mitotic cell cycle"/>
    <property type="evidence" value="ECO:0000250"/>
    <property type="project" value="UniProtKB"/>
</dbReference>
<dbReference type="GO" id="GO:0007095">
    <property type="term" value="P:mitotic G2 DNA damage checkpoint signaling"/>
    <property type="evidence" value="ECO:0007669"/>
    <property type="project" value="TreeGrafter"/>
</dbReference>
<dbReference type="CDD" id="cd07861">
    <property type="entry name" value="STKc_CDK1_euk"/>
    <property type="match status" value="1"/>
</dbReference>
<dbReference type="FunFam" id="1.10.510.10:FF:000231">
    <property type="entry name" value="Cyclin-dependent kinase 1"/>
    <property type="match status" value="1"/>
</dbReference>
<dbReference type="FunFam" id="3.30.200.20:FF:000027">
    <property type="entry name" value="Putative Cyclin-dependent kinase 1"/>
    <property type="match status" value="1"/>
</dbReference>
<dbReference type="Gene3D" id="3.30.200.20">
    <property type="entry name" value="Phosphorylase Kinase, domain 1"/>
    <property type="match status" value="1"/>
</dbReference>
<dbReference type="Gene3D" id="1.10.510.10">
    <property type="entry name" value="Transferase(Phosphotransferase) domain 1"/>
    <property type="match status" value="1"/>
</dbReference>
<dbReference type="InterPro" id="IPR050108">
    <property type="entry name" value="CDK"/>
</dbReference>
<dbReference type="InterPro" id="IPR011009">
    <property type="entry name" value="Kinase-like_dom_sf"/>
</dbReference>
<dbReference type="InterPro" id="IPR000719">
    <property type="entry name" value="Prot_kinase_dom"/>
</dbReference>
<dbReference type="InterPro" id="IPR017441">
    <property type="entry name" value="Protein_kinase_ATP_BS"/>
</dbReference>
<dbReference type="InterPro" id="IPR008271">
    <property type="entry name" value="Ser/Thr_kinase_AS"/>
</dbReference>
<dbReference type="PANTHER" id="PTHR24056">
    <property type="entry name" value="CELL DIVISION PROTEIN KINASE"/>
    <property type="match status" value="1"/>
</dbReference>
<dbReference type="PANTHER" id="PTHR24056:SF334">
    <property type="entry name" value="CYCLIN-DEPENDENT KINASE 1"/>
    <property type="match status" value="1"/>
</dbReference>
<dbReference type="Pfam" id="PF00069">
    <property type="entry name" value="Pkinase"/>
    <property type="match status" value="1"/>
</dbReference>
<dbReference type="SMART" id="SM00220">
    <property type="entry name" value="S_TKc"/>
    <property type="match status" value="1"/>
</dbReference>
<dbReference type="SUPFAM" id="SSF56112">
    <property type="entry name" value="Protein kinase-like (PK-like)"/>
    <property type="match status" value="1"/>
</dbReference>
<dbReference type="PROSITE" id="PS00107">
    <property type="entry name" value="PROTEIN_KINASE_ATP"/>
    <property type="match status" value="1"/>
</dbReference>
<dbReference type="PROSITE" id="PS50011">
    <property type="entry name" value="PROTEIN_KINASE_DOM"/>
    <property type="match status" value="1"/>
</dbReference>
<dbReference type="PROSITE" id="PS00108">
    <property type="entry name" value="PROTEIN_KINASE_ST"/>
    <property type="match status" value="1"/>
</dbReference>
<evidence type="ECO:0000250" key="1">
    <source>
        <dbReference type="UniProtKB" id="P06493"/>
    </source>
</evidence>
<evidence type="ECO:0000250" key="2">
    <source>
        <dbReference type="UniProtKB" id="P11440"/>
    </source>
</evidence>
<evidence type="ECO:0000250" key="3">
    <source>
        <dbReference type="UniProtKB" id="P13863"/>
    </source>
</evidence>
<evidence type="ECO:0000250" key="4">
    <source>
        <dbReference type="UniProtKB" id="P51958"/>
    </source>
</evidence>
<evidence type="ECO:0000255" key="5">
    <source>
        <dbReference type="PROSITE-ProRule" id="PRU00159"/>
    </source>
</evidence>
<evidence type="ECO:0000255" key="6">
    <source>
        <dbReference type="PROSITE-ProRule" id="PRU10027"/>
    </source>
</evidence>
<evidence type="ECO:0000305" key="7"/>
<proteinExistence type="evidence at transcript level"/>
<name>CDK1_ORYCU</name>
<reference key="1">
    <citation type="submission" date="2000-10" db="EMBL/GenBank/DDBJ databases">
        <title>cDNA cloning of Cdc2 and cyclin B in medaka species.</title>
        <authorList>
            <person name="Yamashita M."/>
            <person name="Mita K."/>
        </authorList>
    </citation>
    <scope>NUCLEOTIDE SEQUENCE [MRNA]</scope>
    <source>
        <tissue>Ovary</tissue>
    </source>
</reference>
<sequence>MEDYVKIEKIGEGTYGVVYKGRHKSTGQVVAMKKIRLESEEEGVPSTAVREVSLLQELKHPNVVRLLDVLMQESRLYLIFEFLSMDLKKYLDSIPSGQYMDPMLVKSYLYQILEGIYFCHRRRVLHRDLKPQNLLIDNKGVIKLADFGLSRAFGVPVRVYTHEVVTLWYRAPEVLLGSPRYSTPVDVWSTGTIFAELATKKPLFHGDSEIDQLFRIFRTLGTPNNDVWPDVESLPDYKSTFPKWKGGSLSSMVKNLDKNGLDLLAKMLIYNPPKRISAREAMTHPYFDDLDKSTLPAACINGV</sequence>
<feature type="chain" id="PRO_0000085730" description="Cyclin-dependent kinase 1">
    <location>
        <begin position="1"/>
        <end position="303"/>
    </location>
</feature>
<feature type="domain" description="Protein kinase" evidence="5">
    <location>
        <begin position="4"/>
        <end position="287"/>
    </location>
</feature>
<feature type="active site" description="Proton acceptor" evidence="5 6">
    <location>
        <position position="128"/>
    </location>
</feature>
<feature type="binding site" evidence="5">
    <location>
        <begin position="10"/>
        <end position="18"/>
    </location>
    <ligand>
        <name>ATP</name>
        <dbReference type="ChEBI" id="CHEBI:30616"/>
    </ligand>
</feature>
<feature type="binding site" evidence="5">
    <location>
        <position position="33"/>
    </location>
    <ligand>
        <name>ATP</name>
        <dbReference type="ChEBI" id="CHEBI:30616"/>
    </ligand>
</feature>
<feature type="modified residue" description="Phosphothreonine" evidence="1">
    <location>
        <position position="14"/>
    </location>
</feature>
<feature type="modified residue" description="Phosphotyrosine; by wee1 and wee2" evidence="1">
    <location>
        <position position="15"/>
    </location>
</feature>
<feature type="modified residue" description="Phosphothreonine; by cak" evidence="1">
    <location>
        <position position="161"/>
    </location>
</feature>
<gene>
    <name type="primary">cdk1</name>
    <name type="synonym">cdc2</name>
</gene>